<accession>C7YS44</accession>
<reference evidence="10" key="1">
    <citation type="journal article" date="2009" name="PLoS Genet.">
        <title>The genome of Nectria haematococca: contribution of supernumerary chromosomes to gene expansion.</title>
        <authorList>
            <person name="Coleman J.J."/>
            <person name="Rounsley S.D."/>
            <person name="Rodriguez-Carres M."/>
            <person name="Kuo A."/>
            <person name="Wasmann C.C."/>
            <person name="Grimwood J."/>
            <person name="Schmutz J."/>
            <person name="Taga M."/>
            <person name="White G.J."/>
            <person name="Zhou S."/>
            <person name="Schwartz D.C."/>
            <person name="Freitag M."/>
            <person name="Ma L.-J."/>
            <person name="Danchin E.G.J."/>
            <person name="Henrissat B."/>
            <person name="Coutinho P.M."/>
            <person name="Nelson D.R."/>
            <person name="Straney D."/>
            <person name="Napoli C.A."/>
            <person name="Barker B.M."/>
            <person name="Gribskov M."/>
            <person name="Rep M."/>
            <person name="Kroken S."/>
            <person name="Molnar I."/>
            <person name="Rensing C."/>
            <person name="Kennell J.C."/>
            <person name="Zamora J."/>
            <person name="Farman M.L."/>
            <person name="Selker E.U."/>
            <person name="Salamov A."/>
            <person name="Shapiro H."/>
            <person name="Pangilinan J."/>
            <person name="Lindquist E."/>
            <person name="Lamers C."/>
            <person name="Grigoriev I.V."/>
            <person name="Geiser D.M."/>
            <person name="Covert S.F."/>
            <person name="Temporini E."/>
            <person name="VanEtten H.D."/>
        </authorList>
    </citation>
    <scope>NUCLEOTIDE SEQUENCE [LARGE SCALE GENOMIC DNA]</scope>
    <source>
        <strain evidence="10">ATCC MYA-4622 / CBS 123669 / FGSC 9596 / NRRL 45880 / 77-13-4</strain>
    </source>
</reference>
<reference evidence="8" key="2">
    <citation type="journal article" date="2022" name="Protein Expr. Purif.">
        <title>Production of selenomethionine labeled polyglycine hydrolases in Pichia pastoris.</title>
        <authorList>
            <person name="Naumann T.A."/>
            <person name="Sollenberger K.G."/>
            <person name="Hao G."/>
        </authorList>
    </citation>
    <scope>FUNCTION</scope>
    <scope>CATALYTIC ACTIVITY</scope>
    <scope>SUBCELLULAR LOCATION</scope>
</reference>
<reference evidence="11" key="3">
    <citation type="journal article" date="2023" name="Acta Crystallogr. D Struct. Biol.">
        <title>Crystal structure of a polyglycine hydrolase determined using a RoseTTAFold model.</title>
        <authorList>
            <person name="Dowling N.V."/>
            <person name="Naumann T.A."/>
            <person name="Price N.P.J."/>
            <person name="Rose D.R."/>
        </authorList>
    </citation>
    <scope>X-RAY CRYSTALLOGRAPHY (2.19 ANGSTROMS) OF 33-636</scope>
    <scope>FUNCTION</scope>
    <scope>CATALYTIC ACTIVITY</scope>
    <scope>SUBCELLULAR LOCATION</scope>
    <scope>DISULFIDE BOND</scope>
    <scope>MUTAGENESIS OF PHE-554 AND 583-ARG-ASP-584</scope>
</reference>
<proteinExistence type="evidence at protein level"/>
<feature type="signal peptide" evidence="2">
    <location>
        <begin position="1"/>
        <end position="22"/>
    </location>
</feature>
<feature type="chain" id="PRO_5002988623" description="Polyglycine hydrolase" evidence="2">
    <location>
        <begin position="23"/>
        <end position="636"/>
    </location>
</feature>
<feature type="region of interest" description="Disordered" evidence="4">
    <location>
        <begin position="512"/>
        <end position="540"/>
    </location>
</feature>
<feature type="active site" evidence="1">
    <location>
        <position position="363"/>
    </location>
</feature>
<feature type="glycosylation site" description="N-linked (GlcNAc...) asparagine" evidence="3">
    <location>
        <position position="30"/>
    </location>
</feature>
<feature type="glycosylation site" description="N-linked (GlcNAc...) asparagine" evidence="3">
    <location>
        <position position="151"/>
    </location>
</feature>
<feature type="glycosylation site" description="N-linked (GlcNAc...) asparagine" evidence="3">
    <location>
        <position position="383"/>
    </location>
</feature>
<feature type="glycosylation site" description="N-linked (GlcNAc...) asparagine" evidence="3">
    <location>
        <position position="481"/>
    </location>
</feature>
<feature type="disulfide bond" evidence="6 11">
    <location>
        <begin position="141"/>
        <end position="175"/>
    </location>
</feature>
<feature type="mutagenesis site" description="Decreases protein level with no apparent gain of beta-lactamase activity; when associated with 583-K--T-584." evidence="6">
    <original>F</original>
    <variation>G</variation>
    <location>
        <position position="554"/>
    </location>
</feature>
<feature type="mutagenesis site" description="Decreases protein level with no apparent gain of beta-lactamase activity; when associated with G-554." evidence="6">
    <original>RD</original>
    <variation>KT</variation>
    <location>
        <begin position="583"/>
        <end position="584"/>
    </location>
</feature>
<feature type="strand" evidence="12">
    <location>
        <begin position="35"/>
        <end position="41"/>
    </location>
</feature>
<feature type="helix" evidence="12">
    <location>
        <begin position="43"/>
        <end position="55"/>
    </location>
</feature>
<feature type="strand" evidence="12">
    <location>
        <begin position="58"/>
        <end position="67"/>
    </location>
</feature>
<feature type="helix" evidence="12">
    <location>
        <begin position="69"/>
        <end position="71"/>
    </location>
</feature>
<feature type="strand" evidence="12">
    <location>
        <begin position="73"/>
        <end position="80"/>
    </location>
</feature>
<feature type="strand" evidence="12">
    <location>
        <begin position="86"/>
        <end position="92"/>
    </location>
</feature>
<feature type="helix" evidence="12">
    <location>
        <begin position="94"/>
        <end position="105"/>
    </location>
</feature>
<feature type="turn" evidence="12">
    <location>
        <begin position="106"/>
        <end position="108"/>
    </location>
</feature>
<feature type="strand" evidence="12">
    <location>
        <begin position="110"/>
        <end position="118"/>
    </location>
</feature>
<feature type="helix" evidence="12">
    <location>
        <begin position="120"/>
        <end position="122"/>
    </location>
</feature>
<feature type="strand" evidence="12">
    <location>
        <begin position="124"/>
        <end position="130"/>
    </location>
</feature>
<feature type="strand" evidence="12">
    <location>
        <begin position="137"/>
        <end position="145"/>
    </location>
</feature>
<feature type="helix" evidence="12">
    <location>
        <begin position="146"/>
        <end position="148"/>
    </location>
</feature>
<feature type="helix" evidence="12">
    <location>
        <begin position="149"/>
        <end position="153"/>
    </location>
</feature>
<feature type="strand" evidence="12">
    <location>
        <begin position="158"/>
        <end position="167"/>
    </location>
</feature>
<feature type="strand" evidence="12">
    <location>
        <begin position="169"/>
        <end position="180"/>
    </location>
</feature>
<feature type="strand" evidence="12">
    <location>
        <begin position="187"/>
        <end position="189"/>
    </location>
</feature>
<feature type="helix" evidence="12">
    <location>
        <begin position="200"/>
        <end position="209"/>
    </location>
</feature>
<feature type="strand" evidence="12">
    <location>
        <begin position="214"/>
        <end position="220"/>
    </location>
</feature>
<feature type="strand" evidence="12">
    <location>
        <begin position="226"/>
        <end position="231"/>
    </location>
</feature>
<feature type="strand" evidence="12">
    <location>
        <begin position="236"/>
        <end position="244"/>
    </location>
</feature>
<feature type="helix" evidence="12">
    <location>
        <begin position="246"/>
        <end position="258"/>
    </location>
</feature>
<feature type="strand" evidence="12">
    <location>
        <begin position="262"/>
        <end position="269"/>
    </location>
</feature>
<feature type="helix" evidence="12">
    <location>
        <begin position="272"/>
        <end position="274"/>
    </location>
</feature>
<feature type="strand" evidence="12">
    <location>
        <begin position="276"/>
        <end position="286"/>
    </location>
</feature>
<feature type="strand" evidence="12">
    <location>
        <begin position="291"/>
        <end position="295"/>
    </location>
</feature>
<feature type="helix" evidence="12">
    <location>
        <begin position="304"/>
        <end position="322"/>
    </location>
</feature>
<feature type="strand" evidence="12">
    <location>
        <begin position="326"/>
        <end position="333"/>
    </location>
</feature>
<feature type="strand" evidence="12">
    <location>
        <begin position="336"/>
        <end position="346"/>
    </location>
</feature>
<feature type="helix" evidence="12">
    <location>
        <begin position="362"/>
        <end position="365"/>
    </location>
</feature>
<feature type="helix" evidence="12">
    <location>
        <begin position="366"/>
        <end position="378"/>
    </location>
</feature>
<feature type="helix" evidence="12">
    <location>
        <begin position="388"/>
        <end position="392"/>
    </location>
</feature>
<feature type="helix" evidence="12">
    <location>
        <begin position="399"/>
        <end position="403"/>
    </location>
</feature>
<feature type="helix" evidence="12">
    <location>
        <begin position="406"/>
        <end position="410"/>
    </location>
</feature>
<feature type="helix" evidence="12">
    <location>
        <begin position="418"/>
        <end position="421"/>
    </location>
</feature>
<feature type="helix" evidence="12">
    <location>
        <begin position="424"/>
        <end position="426"/>
    </location>
</feature>
<feature type="helix" evidence="12">
    <location>
        <begin position="428"/>
        <end position="434"/>
    </location>
</feature>
<feature type="turn" evidence="12">
    <location>
        <begin position="436"/>
        <end position="439"/>
    </location>
</feature>
<feature type="helix" evidence="12">
    <location>
        <begin position="445"/>
        <end position="453"/>
    </location>
</feature>
<feature type="helix" evidence="12">
    <location>
        <begin position="470"/>
        <end position="483"/>
    </location>
</feature>
<feature type="helix" evidence="12">
    <location>
        <begin position="487"/>
        <end position="494"/>
    </location>
</feature>
<feature type="helix" evidence="12">
    <location>
        <begin position="508"/>
        <end position="510"/>
    </location>
</feature>
<feature type="strand" evidence="12">
    <location>
        <begin position="527"/>
        <end position="529"/>
    </location>
</feature>
<feature type="helix" evidence="12">
    <location>
        <begin position="538"/>
        <end position="540"/>
    </location>
</feature>
<feature type="turn" evidence="12">
    <location>
        <begin position="541"/>
        <end position="543"/>
    </location>
</feature>
<feature type="helix" evidence="12">
    <location>
        <begin position="547"/>
        <end position="549"/>
    </location>
</feature>
<feature type="turn" evidence="12">
    <location>
        <begin position="551"/>
        <end position="554"/>
    </location>
</feature>
<feature type="strand" evidence="12">
    <location>
        <begin position="556"/>
        <end position="558"/>
    </location>
</feature>
<feature type="helix" evidence="12">
    <location>
        <begin position="560"/>
        <end position="566"/>
    </location>
</feature>
<feature type="strand" evidence="12">
    <location>
        <begin position="572"/>
        <end position="577"/>
    </location>
</feature>
<feature type="strand" evidence="12">
    <location>
        <begin position="580"/>
        <end position="587"/>
    </location>
</feature>
<feature type="strand" evidence="12">
    <location>
        <begin position="590"/>
        <end position="597"/>
    </location>
</feature>
<feature type="strand" evidence="12">
    <location>
        <begin position="600"/>
        <end position="607"/>
    </location>
</feature>
<feature type="helix" evidence="12">
    <location>
        <begin position="614"/>
        <end position="622"/>
    </location>
</feature>
<feature type="helix" evidence="12">
    <location>
        <begin position="624"/>
        <end position="631"/>
    </location>
</feature>
<evidence type="ECO:0000250" key="1">
    <source>
        <dbReference type="UniProtKB" id="A0A0A7LRQ7"/>
    </source>
</evidence>
<evidence type="ECO:0000255" key="2"/>
<evidence type="ECO:0000255" key="3">
    <source>
        <dbReference type="PROSITE-ProRule" id="PRU00498"/>
    </source>
</evidence>
<evidence type="ECO:0000256" key="4">
    <source>
        <dbReference type="SAM" id="MobiDB-lite"/>
    </source>
</evidence>
<evidence type="ECO:0000269" key="5">
    <source>
    </source>
</evidence>
<evidence type="ECO:0000269" key="6">
    <source>
    </source>
</evidence>
<evidence type="ECO:0000303" key="7">
    <source>
    </source>
</evidence>
<evidence type="ECO:0000305" key="8"/>
<evidence type="ECO:0000312" key="9">
    <source>
        <dbReference type="EMBL" id="EEU45181.1"/>
    </source>
</evidence>
<evidence type="ECO:0000312" key="10">
    <source>
        <dbReference type="Proteomes" id="UP000005206"/>
    </source>
</evidence>
<evidence type="ECO:0007744" key="11">
    <source>
        <dbReference type="PDB" id="7TPU"/>
    </source>
</evidence>
<evidence type="ECO:0007829" key="12">
    <source>
        <dbReference type="PDB" id="7TPU"/>
    </source>
</evidence>
<name>PGH_FUSV7</name>
<keyword id="KW-0002">3D-structure</keyword>
<keyword id="KW-1015">Disulfide bond</keyword>
<keyword id="KW-0325">Glycoprotein</keyword>
<keyword id="KW-0378">Hydrolase</keyword>
<keyword id="KW-1185">Reference proteome</keyword>
<keyword id="KW-0964">Secreted</keyword>
<keyword id="KW-0732">Signal</keyword>
<keyword id="KW-0843">Virulence</keyword>
<gene>
    <name evidence="9" type="ORF">NECHADRAFT_40822</name>
</gene>
<organism evidence="10">
    <name type="scientific">Fusarium vanettenii (strain ATCC MYA-4622 / CBS 123669 / FGSC 9596 / NRRL 45880 / 77-13-4)</name>
    <name type="common">Fusarium solani subsp. pisi</name>
    <dbReference type="NCBI Taxonomy" id="660122"/>
    <lineage>
        <taxon>Eukaryota</taxon>
        <taxon>Fungi</taxon>
        <taxon>Dikarya</taxon>
        <taxon>Ascomycota</taxon>
        <taxon>Pezizomycotina</taxon>
        <taxon>Sordariomycetes</taxon>
        <taxon>Hypocreomycetidae</taxon>
        <taxon>Hypocreales</taxon>
        <taxon>Nectriaceae</taxon>
        <taxon>Fusarium</taxon>
        <taxon>Fusarium solani species complex</taxon>
        <taxon>Fusarium vanettenii</taxon>
    </lineage>
</organism>
<comment type="function">
    <text evidence="5 6">Serine-type endopeptidase that cleaves Gly-Gly bonds in the polyglycine linker of host plant class IV chitinases to disrupt their chitin-binding, and thereby plays a role in lowering the defense responses of the host to the fungus (PubMed:36762862). Degrades Z.mays Endochitinase A (CHIA) in vitro, although corn is not its host species (PubMed:35240278, PubMed:36762862).</text>
</comment>
<comment type="catalytic activity">
    <reaction evidence="5 6">
        <text>a glycyl-glycyl-[protein] + H2O = N-terminal glycyl-[protein] + [protein]-C-terminal glycine</text>
        <dbReference type="Rhea" id="RHEA:76243"/>
        <dbReference type="Rhea" id="RHEA-COMP:12666"/>
        <dbReference type="Rhea" id="RHEA-COMP:15093"/>
        <dbReference type="Rhea" id="RHEA-COMP:18656"/>
        <dbReference type="ChEBI" id="CHEBI:15377"/>
        <dbReference type="ChEBI" id="CHEBI:64723"/>
        <dbReference type="ChEBI" id="CHEBI:83148"/>
        <dbReference type="ChEBI" id="CHEBI:195192"/>
    </reaction>
</comment>
<comment type="subcellular location">
    <subcellularLocation>
        <location evidence="5 6">Secreted</location>
    </subcellularLocation>
</comment>
<comment type="similarity">
    <text evidence="8">Belongs to the peptidase S12 family.</text>
</comment>
<protein>
    <recommendedName>
        <fullName evidence="7">Polyglycine hydrolase</fullName>
        <ecNumber evidence="5 6">3.4.21.-</ecNumber>
    </recommendedName>
    <alternativeName>
        <fullName evidence="7">Chitinase modifying protein</fullName>
        <shortName evidence="7">Fvan-CMP</shortName>
    </alternativeName>
</protein>
<dbReference type="EC" id="3.4.21.-" evidence="5 6"/>
<dbReference type="EMBL" id="GG698899">
    <property type="protein sequence ID" value="EEU45181.1"/>
    <property type="molecule type" value="Genomic_DNA"/>
</dbReference>
<dbReference type="RefSeq" id="XP_003050894.1">
    <property type="nucleotide sequence ID" value="XM_003050848.1"/>
</dbReference>
<dbReference type="PDB" id="7TPU">
    <property type="method" value="X-ray"/>
    <property type="resolution" value="2.19 A"/>
    <property type="chains" value="A=33-636"/>
</dbReference>
<dbReference type="PDBsum" id="7TPU"/>
<dbReference type="SMR" id="C7YS44"/>
<dbReference type="MEROPS" id="S12.A12"/>
<dbReference type="EnsemblFungi" id="NechaT40822">
    <property type="protein sequence ID" value="NechaP40822"/>
    <property type="gene ID" value="NechaG40822"/>
</dbReference>
<dbReference type="GeneID" id="9666062"/>
<dbReference type="KEGG" id="nhe:NECHADRAFT_40822"/>
<dbReference type="VEuPathDB" id="FungiDB:NECHADRAFT_40822"/>
<dbReference type="eggNOG" id="ENOG502S73P">
    <property type="taxonomic scope" value="Eukaryota"/>
</dbReference>
<dbReference type="HOGENOM" id="CLU_027352_0_0_1"/>
<dbReference type="InParanoid" id="C7YS44"/>
<dbReference type="OMA" id="AGIWTKQ"/>
<dbReference type="OrthoDB" id="5946976at2759"/>
<dbReference type="Proteomes" id="UP000005206">
    <property type="component" value="Unassembled WGS sequence"/>
</dbReference>
<dbReference type="GO" id="GO:0005576">
    <property type="term" value="C:extracellular region"/>
    <property type="evidence" value="ECO:0000314"/>
    <property type="project" value="UniProtKB"/>
</dbReference>
<dbReference type="GO" id="GO:0004252">
    <property type="term" value="F:serine-type endopeptidase activity"/>
    <property type="evidence" value="ECO:0000314"/>
    <property type="project" value="UniProtKB"/>
</dbReference>
<dbReference type="GO" id="GO:0140590">
    <property type="term" value="P:effector-mediated suppression of host defense response"/>
    <property type="evidence" value="ECO:0000314"/>
    <property type="project" value="UniProtKB"/>
</dbReference>
<dbReference type="Gene3D" id="3.40.710.10">
    <property type="entry name" value="DD-peptidase/beta-lactamase superfamily"/>
    <property type="match status" value="1"/>
</dbReference>
<dbReference type="InterPro" id="IPR050491">
    <property type="entry name" value="Bact_CellWall_Synth/Modif"/>
</dbReference>
<dbReference type="InterPro" id="IPR001466">
    <property type="entry name" value="Beta-lactam-related"/>
</dbReference>
<dbReference type="InterPro" id="IPR012338">
    <property type="entry name" value="Beta-lactam/transpept-like"/>
</dbReference>
<dbReference type="InterPro" id="IPR049511">
    <property type="entry name" value="PGH-like_rpt"/>
</dbReference>
<dbReference type="PANTHER" id="PTHR46825:SF9">
    <property type="entry name" value="BETA-LACTAMASE-RELATED DOMAIN-CONTAINING PROTEIN"/>
    <property type="match status" value="1"/>
</dbReference>
<dbReference type="PANTHER" id="PTHR46825">
    <property type="entry name" value="D-ALANYL-D-ALANINE-CARBOXYPEPTIDASE/ENDOPEPTIDASE AMPH"/>
    <property type="match status" value="1"/>
</dbReference>
<dbReference type="Pfam" id="PF00144">
    <property type="entry name" value="Beta-lactamase"/>
    <property type="match status" value="1"/>
</dbReference>
<dbReference type="Pfam" id="PF17660">
    <property type="entry name" value="BTRD1"/>
    <property type="match status" value="3"/>
</dbReference>
<dbReference type="SUPFAM" id="SSF56601">
    <property type="entry name" value="beta-lactamase/transpeptidase-like"/>
    <property type="match status" value="1"/>
</dbReference>
<dbReference type="PROSITE" id="PS51257">
    <property type="entry name" value="PROKAR_LIPOPROTEIN"/>
    <property type="match status" value="1"/>
</dbReference>
<sequence length="636" mass="70412">MHSLSLRRLLTSVLSLCSCSSALPNQRRSNVTSHVETYYSVDGATHAEKSKALKADGYRIVSLSSYGSPDSANYAAIWVQEEGPSFEIIHDADEATYNSWLQTWKSRGYVSTQVSATGPAENAVFAGVMENINVANWFQSCELENPWAFSNTTGNVDVVVKGFRMFGTPEERRYCILGHENVGNEQTTIQYSTPSFTVNFASTFEAETTKRFWRPSRLFLSEDHIITPSFADTSVGKWSHAVDLTKAELKEKIETERAKGLYPIDIQGGGSGSSERFTVVFAERTSPKPRQWNVRGEITGFEDNKAAEEEVDSIMRRFMEKNGVRQAQFAVALEGKTIAERSYTWAEDDRAIVEPDDIFLLASVSKMFLHASIDWLVSHDMLNFSTPVYDLLGYKPADSRANDINVQHLLDHSAGYDRSMSGDPSFMFREIAQSLPTKGAKAATLRDVIEYVVAKPLDFTPGDYSAYSNYCPMLLSYVVTNITGVPYLDFLEKNILDGLNVRLYETAASKHTEDRIVQESKNTGQDPVHPQSAKLVPGPHGGDGAVKEECAGTFAMAASASSLAKFIGSHAVWGTGGRVSSNRDGSLSGARAYVESRGTIDWALTLNTREYISETEFDELRWYSLPDFLSAFPIAG</sequence>